<reference key="1">
    <citation type="journal article" date="2010" name="BMC Genomics">
        <title>A genomic perspective on the potential of Actinobacillus succinogenes for industrial succinate production.</title>
        <authorList>
            <person name="McKinlay J.B."/>
            <person name="Laivenieks M."/>
            <person name="Schindler B.D."/>
            <person name="McKinlay A.A."/>
            <person name="Siddaramappa S."/>
            <person name="Challacombe J.F."/>
            <person name="Lowry S.R."/>
            <person name="Clum A."/>
            <person name="Lapidus A.L."/>
            <person name="Burkhart K.B."/>
            <person name="Harkins V."/>
            <person name="Vieille C."/>
        </authorList>
    </citation>
    <scope>NUCLEOTIDE SEQUENCE [LARGE SCALE GENOMIC DNA]</scope>
    <source>
        <strain>ATCC 55618 / DSM 22257 / CCUG 43843 / 130Z</strain>
    </source>
</reference>
<accession>A6VPB0</accession>
<feature type="chain" id="PRO_1000072474" description="Large ribosomal subunit protein bL35">
    <location>
        <begin position="1"/>
        <end position="65"/>
    </location>
</feature>
<feature type="region of interest" description="Disordered" evidence="2">
    <location>
        <begin position="1"/>
        <end position="26"/>
    </location>
</feature>
<feature type="compositionally biased region" description="Basic residues" evidence="2">
    <location>
        <begin position="10"/>
        <end position="26"/>
    </location>
</feature>
<evidence type="ECO:0000255" key="1">
    <source>
        <dbReference type="HAMAP-Rule" id="MF_00514"/>
    </source>
</evidence>
<evidence type="ECO:0000256" key="2">
    <source>
        <dbReference type="SAM" id="MobiDB-lite"/>
    </source>
</evidence>
<evidence type="ECO:0000305" key="3"/>
<dbReference type="EMBL" id="CP000746">
    <property type="protein sequence ID" value="ABR74807.1"/>
    <property type="molecule type" value="Genomic_DNA"/>
</dbReference>
<dbReference type="RefSeq" id="WP_012073184.1">
    <property type="nucleotide sequence ID" value="NC_009655.1"/>
</dbReference>
<dbReference type="SMR" id="A6VPB0"/>
<dbReference type="STRING" id="339671.Asuc_1448"/>
<dbReference type="KEGG" id="asu:Asuc_1448"/>
<dbReference type="eggNOG" id="COG0291">
    <property type="taxonomic scope" value="Bacteria"/>
</dbReference>
<dbReference type="HOGENOM" id="CLU_169643_1_1_6"/>
<dbReference type="Proteomes" id="UP000001114">
    <property type="component" value="Chromosome"/>
</dbReference>
<dbReference type="GO" id="GO:0022625">
    <property type="term" value="C:cytosolic large ribosomal subunit"/>
    <property type="evidence" value="ECO:0007669"/>
    <property type="project" value="TreeGrafter"/>
</dbReference>
<dbReference type="GO" id="GO:0003735">
    <property type="term" value="F:structural constituent of ribosome"/>
    <property type="evidence" value="ECO:0007669"/>
    <property type="project" value="InterPro"/>
</dbReference>
<dbReference type="GO" id="GO:0006412">
    <property type="term" value="P:translation"/>
    <property type="evidence" value="ECO:0007669"/>
    <property type="project" value="UniProtKB-UniRule"/>
</dbReference>
<dbReference type="FunFam" id="4.10.410.60:FF:000001">
    <property type="entry name" value="50S ribosomal protein L35"/>
    <property type="match status" value="1"/>
</dbReference>
<dbReference type="Gene3D" id="4.10.410.60">
    <property type="match status" value="1"/>
</dbReference>
<dbReference type="HAMAP" id="MF_00514">
    <property type="entry name" value="Ribosomal_bL35"/>
    <property type="match status" value="1"/>
</dbReference>
<dbReference type="InterPro" id="IPR001706">
    <property type="entry name" value="Ribosomal_bL35"/>
</dbReference>
<dbReference type="InterPro" id="IPR021137">
    <property type="entry name" value="Ribosomal_bL35-like"/>
</dbReference>
<dbReference type="InterPro" id="IPR018265">
    <property type="entry name" value="Ribosomal_bL35_CS"/>
</dbReference>
<dbReference type="InterPro" id="IPR037229">
    <property type="entry name" value="Ribosomal_bL35_sf"/>
</dbReference>
<dbReference type="NCBIfam" id="TIGR00001">
    <property type="entry name" value="rpmI_bact"/>
    <property type="match status" value="1"/>
</dbReference>
<dbReference type="PANTHER" id="PTHR33343">
    <property type="entry name" value="54S RIBOSOMAL PROTEIN BL35M"/>
    <property type="match status" value="1"/>
</dbReference>
<dbReference type="PANTHER" id="PTHR33343:SF1">
    <property type="entry name" value="LARGE RIBOSOMAL SUBUNIT PROTEIN BL35M"/>
    <property type="match status" value="1"/>
</dbReference>
<dbReference type="Pfam" id="PF01632">
    <property type="entry name" value="Ribosomal_L35p"/>
    <property type="match status" value="1"/>
</dbReference>
<dbReference type="PRINTS" id="PR00064">
    <property type="entry name" value="RIBOSOMALL35"/>
</dbReference>
<dbReference type="SUPFAM" id="SSF143034">
    <property type="entry name" value="L35p-like"/>
    <property type="match status" value="1"/>
</dbReference>
<dbReference type="PROSITE" id="PS00936">
    <property type="entry name" value="RIBOSOMAL_L35"/>
    <property type="match status" value="1"/>
</dbReference>
<comment type="similarity">
    <text evidence="1">Belongs to the bacterial ribosomal protein bL35 family.</text>
</comment>
<protein>
    <recommendedName>
        <fullName evidence="1">Large ribosomal subunit protein bL35</fullName>
    </recommendedName>
    <alternativeName>
        <fullName evidence="3">50S ribosomal protein L35</fullName>
    </alternativeName>
</protein>
<name>RL35_ACTSZ</name>
<proteinExistence type="inferred from homology"/>
<organism>
    <name type="scientific">Actinobacillus succinogenes (strain ATCC 55618 / DSM 22257 / CCUG 43843 / 130Z)</name>
    <dbReference type="NCBI Taxonomy" id="339671"/>
    <lineage>
        <taxon>Bacteria</taxon>
        <taxon>Pseudomonadati</taxon>
        <taxon>Pseudomonadota</taxon>
        <taxon>Gammaproteobacteria</taxon>
        <taxon>Pasteurellales</taxon>
        <taxon>Pasteurellaceae</taxon>
        <taxon>Actinobacillus</taxon>
    </lineage>
</organism>
<gene>
    <name evidence="1" type="primary">rpmI</name>
    <name type="ordered locus">Asuc_1448</name>
</gene>
<sequence>MPKIKTVRGAAKRFKKTASGGFKRKQSHLRHILTKKTTKRKRHLRHKSMVAKADNVLVVACLPYA</sequence>
<keyword id="KW-1185">Reference proteome</keyword>
<keyword id="KW-0687">Ribonucleoprotein</keyword>
<keyword id="KW-0689">Ribosomal protein</keyword>